<feature type="chain" id="PRO_0000131919" description="Cytidylate kinase">
    <location>
        <begin position="1"/>
        <end position="233"/>
    </location>
</feature>
<feature type="region of interest" description="Disordered" evidence="2">
    <location>
        <begin position="183"/>
        <end position="202"/>
    </location>
</feature>
<feature type="compositionally biased region" description="Basic and acidic residues" evidence="2">
    <location>
        <begin position="183"/>
        <end position="201"/>
    </location>
</feature>
<feature type="binding site" evidence="1">
    <location>
        <begin position="15"/>
        <end position="23"/>
    </location>
    <ligand>
        <name>ATP</name>
        <dbReference type="ChEBI" id="CHEBI:30616"/>
    </ligand>
</feature>
<protein>
    <recommendedName>
        <fullName evidence="1">Cytidylate kinase</fullName>
        <shortName evidence="1">CK</shortName>
        <ecNumber evidence="1">2.7.4.25</ecNumber>
    </recommendedName>
    <alternativeName>
        <fullName evidence="1">Cytidine monophosphate kinase</fullName>
        <shortName evidence="1">CMP kinase</shortName>
    </alternativeName>
</protein>
<gene>
    <name evidence="1" type="primary">cmk</name>
    <name type="ordered locus">GSU2605</name>
</gene>
<organism>
    <name type="scientific">Geobacter sulfurreducens (strain ATCC 51573 / DSM 12127 / PCA)</name>
    <dbReference type="NCBI Taxonomy" id="243231"/>
    <lineage>
        <taxon>Bacteria</taxon>
        <taxon>Pseudomonadati</taxon>
        <taxon>Thermodesulfobacteriota</taxon>
        <taxon>Desulfuromonadia</taxon>
        <taxon>Geobacterales</taxon>
        <taxon>Geobacteraceae</taxon>
        <taxon>Geobacter</taxon>
    </lineage>
</organism>
<evidence type="ECO:0000255" key="1">
    <source>
        <dbReference type="HAMAP-Rule" id="MF_00238"/>
    </source>
</evidence>
<evidence type="ECO:0000256" key="2">
    <source>
        <dbReference type="SAM" id="MobiDB-lite"/>
    </source>
</evidence>
<dbReference type="EC" id="2.7.4.25" evidence="1"/>
<dbReference type="EMBL" id="AE017180">
    <property type="protein sequence ID" value="AAR35977.1"/>
    <property type="molecule type" value="Genomic_DNA"/>
</dbReference>
<dbReference type="RefSeq" id="NP_953650.1">
    <property type="nucleotide sequence ID" value="NC_002939.5"/>
</dbReference>
<dbReference type="RefSeq" id="WP_010943242.1">
    <property type="nucleotide sequence ID" value="NC_002939.5"/>
</dbReference>
<dbReference type="SMR" id="Q749Y7"/>
<dbReference type="FunCoup" id="Q749Y7">
    <property type="interactions" value="377"/>
</dbReference>
<dbReference type="STRING" id="243231.GSU2605"/>
<dbReference type="EnsemblBacteria" id="AAR35977">
    <property type="protein sequence ID" value="AAR35977"/>
    <property type="gene ID" value="GSU2605"/>
</dbReference>
<dbReference type="KEGG" id="gsu:GSU2605"/>
<dbReference type="PATRIC" id="fig|243231.5.peg.2635"/>
<dbReference type="eggNOG" id="COG0283">
    <property type="taxonomic scope" value="Bacteria"/>
</dbReference>
<dbReference type="HOGENOM" id="CLU_079959_0_2_7"/>
<dbReference type="InParanoid" id="Q749Y7"/>
<dbReference type="OrthoDB" id="9807434at2"/>
<dbReference type="Proteomes" id="UP000000577">
    <property type="component" value="Chromosome"/>
</dbReference>
<dbReference type="GO" id="GO:0005829">
    <property type="term" value="C:cytosol"/>
    <property type="evidence" value="ECO:0000318"/>
    <property type="project" value="GO_Central"/>
</dbReference>
<dbReference type="GO" id="GO:0004127">
    <property type="term" value="F:(d)CMP kinase activity"/>
    <property type="evidence" value="ECO:0000318"/>
    <property type="project" value="GO_Central"/>
</dbReference>
<dbReference type="GO" id="GO:0005524">
    <property type="term" value="F:ATP binding"/>
    <property type="evidence" value="ECO:0007669"/>
    <property type="project" value="UniProtKB-UniRule"/>
</dbReference>
<dbReference type="GO" id="GO:0036430">
    <property type="term" value="F:CMP kinase activity"/>
    <property type="evidence" value="ECO:0007669"/>
    <property type="project" value="RHEA"/>
</dbReference>
<dbReference type="GO" id="GO:0036431">
    <property type="term" value="F:dCMP kinase activity"/>
    <property type="evidence" value="ECO:0007669"/>
    <property type="project" value="RHEA"/>
</dbReference>
<dbReference type="GO" id="GO:0015949">
    <property type="term" value="P:nucleobase-containing small molecule interconversion"/>
    <property type="evidence" value="ECO:0000318"/>
    <property type="project" value="GO_Central"/>
</dbReference>
<dbReference type="GO" id="GO:0006220">
    <property type="term" value="P:pyrimidine nucleotide metabolic process"/>
    <property type="evidence" value="ECO:0007669"/>
    <property type="project" value="UniProtKB-UniRule"/>
</dbReference>
<dbReference type="CDD" id="cd02020">
    <property type="entry name" value="CMPK"/>
    <property type="match status" value="1"/>
</dbReference>
<dbReference type="Gene3D" id="3.40.50.300">
    <property type="entry name" value="P-loop containing nucleotide triphosphate hydrolases"/>
    <property type="match status" value="1"/>
</dbReference>
<dbReference type="HAMAP" id="MF_00238">
    <property type="entry name" value="Cytidyl_kinase_type1"/>
    <property type="match status" value="1"/>
</dbReference>
<dbReference type="InterPro" id="IPR003136">
    <property type="entry name" value="Cytidylate_kin"/>
</dbReference>
<dbReference type="InterPro" id="IPR011994">
    <property type="entry name" value="Cytidylate_kinase_dom"/>
</dbReference>
<dbReference type="InterPro" id="IPR027417">
    <property type="entry name" value="P-loop_NTPase"/>
</dbReference>
<dbReference type="NCBIfam" id="TIGR00017">
    <property type="entry name" value="cmk"/>
    <property type="match status" value="1"/>
</dbReference>
<dbReference type="PANTHER" id="PTHR21299:SF2">
    <property type="entry name" value="CYTIDYLATE KINASE"/>
    <property type="match status" value="1"/>
</dbReference>
<dbReference type="PANTHER" id="PTHR21299">
    <property type="entry name" value="CYTIDYLATE KINASE/PANTOATE-BETA-ALANINE LIGASE"/>
    <property type="match status" value="1"/>
</dbReference>
<dbReference type="Pfam" id="PF02224">
    <property type="entry name" value="Cytidylate_kin"/>
    <property type="match status" value="1"/>
</dbReference>
<dbReference type="SUPFAM" id="SSF52540">
    <property type="entry name" value="P-loop containing nucleoside triphosphate hydrolases"/>
    <property type="match status" value="1"/>
</dbReference>
<reference key="1">
    <citation type="journal article" date="2003" name="Science">
        <title>Genome of Geobacter sulfurreducens: metal reduction in subsurface environments.</title>
        <authorList>
            <person name="Methe B.A."/>
            <person name="Nelson K.E."/>
            <person name="Eisen J.A."/>
            <person name="Paulsen I.T."/>
            <person name="Nelson W.C."/>
            <person name="Heidelberg J.F."/>
            <person name="Wu D."/>
            <person name="Wu M."/>
            <person name="Ward N.L."/>
            <person name="Beanan M.J."/>
            <person name="Dodson R.J."/>
            <person name="Madupu R."/>
            <person name="Brinkac L.M."/>
            <person name="Daugherty S.C."/>
            <person name="DeBoy R.T."/>
            <person name="Durkin A.S."/>
            <person name="Gwinn M.L."/>
            <person name="Kolonay J.F."/>
            <person name="Sullivan S.A."/>
            <person name="Haft D.H."/>
            <person name="Selengut J."/>
            <person name="Davidsen T.M."/>
            <person name="Zafar N."/>
            <person name="White O."/>
            <person name="Tran B."/>
            <person name="Romero C."/>
            <person name="Forberger H.A."/>
            <person name="Weidman J.F."/>
            <person name="Khouri H.M."/>
            <person name="Feldblyum T.V."/>
            <person name="Utterback T.R."/>
            <person name="Van Aken S.E."/>
            <person name="Lovley D.R."/>
            <person name="Fraser C.M."/>
        </authorList>
    </citation>
    <scope>NUCLEOTIDE SEQUENCE [LARGE SCALE GENOMIC DNA]</scope>
    <source>
        <strain>ATCC 51573 / DSM 12127 / PCA</strain>
    </source>
</reference>
<proteinExistence type="inferred from homology"/>
<sequence>MSAAGRRGLIVAIDGPSGAGKSTITKLLADRLGYIHIDTGAMFRTVALAASRAGIAPDNDASLAGLCADLEIAFVRNNGCCRVTANGEDVTDAIRTPAISALTSAISARKVVRDVLLRLQRHMAREGGVILEGRDIGTVVFPDADVKFFLSASVEERGRRRYLELKAKGQEVSLDETIAAVARRDEQDSGREHAPLRRADDAVDIDSTGLSIEEVLDRMESIVRERERATPGA</sequence>
<name>KCY_GEOSL</name>
<accession>Q749Y7</accession>
<comment type="catalytic activity">
    <reaction evidence="1">
        <text>CMP + ATP = CDP + ADP</text>
        <dbReference type="Rhea" id="RHEA:11600"/>
        <dbReference type="ChEBI" id="CHEBI:30616"/>
        <dbReference type="ChEBI" id="CHEBI:58069"/>
        <dbReference type="ChEBI" id="CHEBI:60377"/>
        <dbReference type="ChEBI" id="CHEBI:456216"/>
        <dbReference type="EC" id="2.7.4.25"/>
    </reaction>
</comment>
<comment type="catalytic activity">
    <reaction evidence="1">
        <text>dCMP + ATP = dCDP + ADP</text>
        <dbReference type="Rhea" id="RHEA:25094"/>
        <dbReference type="ChEBI" id="CHEBI:30616"/>
        <dbReference type="ChEBI" id="CHEBI:57566"/>
        <dbReference type="ChEBI" id="CHEBI:58593"/>
        <dbReference type="ChEBI" id="CHEBI:456216"/>
        <dbReference type="EC" id="2.7.4.25"/>
    </reaction>
</comment>
<comment type="subcellular location">
    <subcellularLocation>
        <location evidence="1">Cytoplasm</location>
    </subcellularLocation>
</comment>
<comment type="similarity">
    <text evidence="1">Belongs to the cytidylate kinase family. Type 1 subfamily.</text>
</comment>
<keyword id="KW-0067">ATP-binding</keyword>
<keyword id="KW-0963">Cytoplasm</keyword>
<keyword id="KW-0418">Kinase</keyword>
<keyword id="KW-0547">Nucleotide-binding</keyword>
<keyword id="KW-1185">Reference proteome</keyword>
<keyword id="KW-0808">Transferase</keyword>